<evidence type="ECO:0000250" key="1"/>
<evidence type="ECO:0000250" key="2">
    <source>
        <dbReference type="UniProtKB" id="P57083"/>
    </source>
</evidence>
<evidence type="ECO:0000250" key="3">
    <source>
        <dbReference type="UniProtKB" id="Q05059"/>
    </source>
</evidence>
<evidence type="ECO:0000250" key="4">
    <source>
        <dbReference type="UniProtKB" id="Q69091"/>
    </source>
</evidence>
<evidence type="ECO:0000255" key="5"/>
<evidence type="ECO:0000256" key="6">
    <source>
        <dbReference type="SAM" id="MobiDB-lite"/>
    </source>
</evidence>
<evidence type="ECO:0000305" key="7"/>
<protein>
    <recommendedName>
        <fullName>Envelope glycoprotein D</fullName>
        <shortName>gD</shortName>
    </recommendedName>
    <alternativeName>
        <fullName>Glycoprotein IV</fullName>
    </alternativeName>
</protein>
<organism>
    <name type="scientific">Bovine herpesvirus 1.2 (strain ST)</name>
    <name type="common">BoHV-1</name>
    <name type="synonym">Infectious bovine rhinotracheitis virus</name>
    <dbReference type="NCBI Taxonomy" id="45407"/>
    <lineage>
        <taxon>Viruses</taxon>
        <taxon>Duplodnaviria</taxon>
        <taxon>Heunggongvirae</taxon>
        <taxon>Peploviricota</taxon>
        <taxon>Herviviricetes</taxon>
        <taxon>Herpesvirales</taxon>
        <taxon>Orthoherpesviridae</taxon>
        <taxon>Alphaherpesvirinae</taxon>
        <taxon>Varicellovirus</taxon>
        <taxon>Varicellovirus bovinealpha1</taxon>
    </lineage>
</organism>
<reference key="1">
    <citation type="journal article" date="1994" name="Virology">
        <title>The complete DNA sequence and the genetic organization of the short unique region (US) of the bovine herpesvirus type 1 (ST strain).</title>
        <authorList>
            <person name="Leung-Tack P."/>
            <person name="Audonnet J.F."/>
            <person name="Riviere M."/>
        </authorList>
    </citation>
    <scope>NUCLEOTIDE SEQUENCE [GENOMIC DNA]</scope>
</reference>
<dbReference type="EMBL" id="Z23068">
    <property type="protein sequence ID" value="CAA80604.1"/>
    <property type="molecule type" value="Genomic_DNA"/>
</dbReference>
<dbReference type="PIR" id="S35784">
    <property type="entry name" value="S35784"/>
</dbReference>
<dbReference type="SMR" id="Q08100"/>
<dbReference type="GlyCosmos" id="Q08100">
    <property type="glycosylation" value="2 sites, No reported glycans"/>
</dbReference>
<dbReference type="GO" id="GO:0016020">
    <property type="term" value="C:membrane"/>
    <property type="evidence" value="ECO:0007669"/>
    <property type="project" value="UniProtKB-KW"/>
</dbReference>
<dbReference type="GO" id="GO:0019031">
    <property type="term" value="C:viral envelope"/>
    <property type="evidence" value="ECO:0007669"/>
    <property type="project" value="UniProtKB-KW"/>
</dbReference>
<dbReference type="GO" id="GO:0055036">
    <property type="term" value="C:virion membrane"/>
    <property type="evidence" value="ECO:0007669"/>
    <property type="project" value="UniProtKB-SubCell"/>
</dbReference>
<dbReference type="GO" id="GO:0098670">
    <property type="term" value="P:entry receptor-mediated virion attachment to host cell"/>
    <property type="evidence" value="ECO:0007669"/>
    <property type="project" value="UniProtKB-KW"/>
</dbReference>
<dbReference type="GO" id="GO:0046718">
    <property type="term" value="P:symbiont entry into host cell"/>
    <property type="evidence" value="ECO:0007669"/>
    <property type="project" value="UniProtKB-KW"/>
</dbReference>
<dbReference type="Gene3D" id="2.70.230.10">
    <property type="match status" value="1"/>
</dbReference>
<dbReference type="InterPro" id="IPR002896">
    <property type="entry name" value="Herpes_glycop_dom"/>
</dbReference>
<dbReference type="InterPro" id="IPR036179">
    <property type="entry name" value="Ig-like_dom_sf"/>
</dbReference>
<dbReference type="Pfam" id="PF01537">
    <property type="entry name" value="Herpes_glycop_D"/>
    <property type="match status" value="1"/>
</dbReference>
<dbReference type="SUPFAM" id="SSF48726">
    <property type="entry name" value="Immunoglobulin"/>
    <property type="match status" value="1"/>
</dbReference>
<accession>Q08100</accession>
<comment type="function">
    <text evidence="3">Envelope glycoprotein that binds to host cell entry receptors, promoting the virus entry into host cells. May trigger fusion with host membrane, by recruiting the fusion machinery composed of gB and gH/gL (By similarity).</text>
</comment>
<comment type="subcellular location">
    <subcellularLocation>
        <location evidence="3">Virion membrane</location>
        <topology evidence="3">Single-pass type I membrane protein</topology>
    </subcellularLocation>
    <text evidence="4">During virion morphogenesis, this protein probably accumulates in the endosomes and trans-Golgi where secondary envelopment occurs.</text>
</comment>
<comment type="similarity">
    <text evidence="7">Belongs to the herpesviridae glycoprotein D family.</text>
</comment>
<sequence>MQGPTLAVLGALLAVAVSLPTPAPRVTVYVDPPAYPMPRYNYTERWHTTGPIPSPFADGREQPVEVRYAASAAACDMLALIADPQVGRTLWEAVRRHARAYNATVIWYKIESGCARPLYYMEYTECEPRKHFGYCRYRTPPFWDSFLAGFAYPTDDELGLIMAAPARLVEGQYRRALYIDGTVAYTDFMVWLPAGDCWFSKLDAARGYTFSACFPAREYEQNKVLRLTYLTQYYPQEAHKAIVDYWFMRHGGVVPPYFEESKGYEPPPAADGGSPAPPGDDEAREDEGETEDGAAGREGNGGPPGPEGDGESPTPEANGGAEGEPKPGPSPDADRPEGWPSLEAITHPPPAPATPAAPDAVPVGVGIGIAAAAIACVAAAAAGAYFVYTRRRGAGPLPRKPKKLPAFGNVNYSALPG</sequence>
<proteinExistence type="inferred from homology"/>
<keyword id="KW-1015">Disulfide bond</keyword>
<keyword id="KW-0325">Glycoprotein</keyword>
<keyword id="KW-0945">Host-virus interaction</keyword>
<keyword id="KW-0472">Membrane</keyword>
<keyword id="KW-0732">Signal</keyword>
<keyword id="KW-0812">Transmembrane</keyword>
<keyword id="KW-1133">Transmembrane helix</keyword>
<keyword id="KW-1161">Viral attachment to host cell</keyword>
<keyword id="KW-1234">Viral attachment to host entry receptor</keyword>
<keyword id="KW-0261">Viral envelope protein</keyword>
<keyword id="KW-0946">Virion</keyword>
<keyword id="KW-1160">Virus entry into host cell</keyword>
<feature type="signal peptide" evidence="1">
    <location>
        <begin position="1"/>
        <end position="18"/>
    </location>
</feature>
<feature type="chain" id="PRO_0000038220" description="Envelope glycoprotein D">
    <location>
        <begin position="19"/>
        <end position="417"/>
    </location>
</feature>
<feature type="topological domain" description="Virion surface" evidence="5">
    <location>
        <begin position="19"/>
        <end position="360"/>
    </location>
</feature>
<feature type="transmembrane region" description="Helical" evidence="5">
    <location>
        <begin position="361"/>
        <end position="389"/>
    </location>
</feature>
<feature type="topological domain" description="Intravirion" evidence="5">
    <location>
        <begin position="390"/>
        <end position="417"/>
    </location>
</feature>
<feature type="region of interest" description="Disordered" evidence="6">
    <location>
        <begin position="259"/>
        <end position="355"/>
    </location>
</feature>
<feature type="compositionally biased region" description="Acidic residues" evidence="6">
    <location>
        <begin position="279"/>
        <end position="292"/>
    </location>
</feature>
<feature type="glycosylation site" description="N-linked (GlcNAc...) asparagine; by host" evidence="5">
    <location>
        <position position="41"/>
    </location>
</feature>
<feature type="glycosylation site" description="N-linked (GlcNAc...) asparagine; by host" evidence="5">
    <location>
        <position position="102"/>
    </location>
</feature>
<feature type="disulfide bond" evidence="2">
    <location>
        <begin position="75"/>
        <end position="197"/>
    </location>
</feature>
<feature type="disulfide bond" evidence="2">
    <location>
        <begin position="114"/>
        <end position="213"/>
    </location>
</feature>
<feature type="disulfide bond" evidence="2">
    <location>
        <begin position="126"/>
        <end position="135"/>
    </location>
</feature>
<organismHost>
    <name type="scientific">Bos taurus</name>
    <name type="common">Bovine</name>
    <dbReference type="NCBI Taxonomy" id="9913"/>
</organismHost>
<gene>
    <name type="primary">gD</name>
    <name type="synonym">gIV</name>
    <name type="synonym">US6</name>
</gene>
<name>GD_BHV1S</name>